<dbReference type="EMBL" id="D16819">
    <property type="protein sequence ID" value="BAA04093.1"/>
    <property type="molecule type" value="Genomic_DNA"/>
</dbReference>
<dbReference type="EMBL" id="AE005674">
    <property type="protein sequence ID" value="AAN43516.1"/>
    <property type="molecule type" value="Genomic_DNA"/>
</dbReference>
<dbReference type="EMBL" id="AE014073">
    <property type="protein sequence ID" value="AAP17345.1"/>
    <property type="molecule type" value="Genomic_DNA"/>
</dbReference>
<dbReference type="PIR" id="S44980">
    <property type="entry name" value="S44980"/>
</dbReference>
<dbReference type="RefSeq" id="NP_707809.1">
    <property type="nucleotide sequence ID" value="NC_004337.2"/>
</dbReference>
<dbReference type="RefSeq" id="WP_000079690.1">
    <property type="nucleotide sequence ID" value="NZ_WPGW01000033.1"/>
</dbReference>
<dbReference type="SMR" id="Q08860"/>
<dbReference type="STRING" id="198214.SF1966"/>
<dbReference type="PaxDb" id="198214-SF1966"/>
<dbReference type="GeneID" id="1025169"/>
<dbReference type="KEGG" id="sfl:SF1966"/>
<dbReference type="KEGG" id="sfx:S2062"/>
<dbReference type="PATRIC" id="fig|198214.7.peg.2347"/>
<dbReference type="HOGENOM" id="CLU_011142_7_2_6"/>
<dbReference type="Proteomes" id="UP000001006">
    <property type="component" value="Chromosome"/>
</dbReference>
<dbReference type="Proteomes" id="UP000002673">
    <property type="component" value="Chromosome"/>
</dbReference>
<dbReference type="GO" id="GO:0009288">
    <property type="term" value="C:bacterial-type flagellum"/>
    <property type="evidence" value="ECO:0007669"/>
    <property type="project" value="UniProtKB-SubCell"/>
</dbReference>
<dbReference type="GO" id="GO:0005576">
    <property type="term" value="C:extracellular region"/>
    <property type="evidence" value="ECO:0007669"/>
    <property type="project" value="UniProtKB-SubCell"/>
</dbReference>
<dbReference type="GO" id="GO:0005198">
    <property type="term" value="F:structural molecule activity"/>
    <property type="evidence" value="ECO:0007669"/>
    <property type="project" value="InterPro"/>
</dbReference>
<dbReference type="FunFam" id="1.20.1330.10:FF:000004">
    <property type="entry name" value="Flagellin"/>
    <property type="match status" value="1"/>
</dbReference>
<dbReference type="Gene3D" id="6.10.280.190">
    <property type="match status" value="1"/>
</dbReference>
<dbReference type="Gene3D" id="2.30.220.10">
    <property type="entry name" value="f41 fragment of flagellin, C-terminal domain"/>
    <property type="match status" value="1"/>
</dbReference>
<dbReference type="Gene3D" id="2.170.280.10">
    <property type="entry name" value="f41 fragment of flagellin, middle domain"/>
    <property type="match status" value="1"/>
</dbReference>
<dbReference type="Gene3D" id="1.20.1330.10">
    <property type="entry name" value="f41 fragment of flagellin, N-terminal domain"/>
    <property type="match status" value="1"/>
</dbReference>
<dbReference type="Gene3D" id="6.10.10.10">
    <property type="entry name" value="Flagellar export chaperone, C-terminal domain"/>
    <property type="match status" value="1"/>
</dbReference>
<dbReference type="InterPro" id="IPR001492">
    <property type="entry name" value="Flagellin"/>
</dbReference>
<dbReference type="InterPro" id="IPR046358">
    <property type="entry name" value="Flagellin_C"/>
</dbReference>
<dbReference type="InterPro" id="IPR042187">
    <property type="entry name" value="Flagellin_C_sub2"/>
</dbReference>
<dbReference type="InterPro" id="IPR001029">
    <property type="entry name" value="Flagellin_N"/>
</dbReference>
<dbReference type="InterPro" id="IPR032826">
    <property type="entry name" value="FliC_H7"/>
</dbReference>
<dbReference type="NCBIfam" id="NF005953">
    <property type="entry name" value="PRK08026.1"/>
    <property type="match status" value="1"/>
</dbReference>
<dbReference type="PANTHER" id="PTHR42792">
    <property type="entry name" value="FLAGELLIN"/>
    <property type="match status" value="1"/>
</dbReference>
<dbReference type="PANTHER" id="PTHR42792:SF2">
    <property type="entry name" value="FLAGELLIN"/>
    <property type="match status" value="1"/>
</dbReference>
<dbReference type="Pfam" id="PF00700">
    <property type="entry name" value="Flagellin_C"/>
    <property type="match status" value="1"/>
</dbReference>
<dbReference type="Pfam" id="PF00669">
    <property type="entry name" value="Flagellin_N"/>
    <property type="match status" value="1"/>
</dbReference>
<dbReference type="Pfam" id="PF12445">
    <property type="entry name" value="FliC"/>
    <property type="match status" value="1"/>
</dbReference>
<dbReference type="PRINTS" id="PR00207">
    <property type="entry name" value="FLAGELLIN"/>
</dbReference>
<dbReference type="SUPFAM" id="SSF64518">
    <property type="entry name" value="Phase 1 flagellin"/>
    <property type="match status" value="1"/>
</dbReference>
<protein>
    <recommendedName>
        <fullName>Flagellin</fullName>
    </recommendedName>
</protein>
<accession>Q08860</accession>
<feature type="chain" id="PRO_0000182582" description="Flagellin">
    <location>
        <begin position="1"/>
        <end position="550"/>
    </location>
</feature>
<comment type="function">
    <text>Flagellin is the subunit protein which polymerizes to form the filaments of bacterial flagella.</text>
</comment>
<comment type="subcellular location">
    <subcellularLocation>
        <location>Secreted</location>
    </subcellularLocation>
    <subcellularLocation>
        <location>Bacterial flagellum</location>
    </subcellularLocation>
</comment>
<comment type="similarity">
    <text evidence="1">Belongs to the bacterial flagellin family.</text>
</comment>
<evidence type="ECO:0000305" key="1"/>
<sequence length="550" mass="56637">MAQVINTNSLSLITQNNINKNQSALSSSIERLSSGLRINSAKDDAAGQAIANRFTSNIKGLTQAARNANDGISVAQTTEGALSEINNNLQRIRELTVQASTGTNSDSDLDSIQDEIKSRLDEIDRVSGQTQFNGVNVLAKDGSMKIQVGANDGQTITIDLKKIDSDTLGLNGFNVNGGGAVANTAASKADLVAANATVVGNKYTVSAGYDAAKASDLLAGVSDGDTVQATINNGFGTAASATNYKYDSASKSYSFDTTTASAADVQKYLTPGVGDTAKGTITIDGSAQDVQISSDGKITASNGDKLYIDTTGRLTKNGSGASLTEASLSTLAANNTKATTIDIGGTSISFTGNSTTPDTITYSVTGAKVDQAAFDKAVSTSGNNVDFTTAGYSVNGTTGAVTKGVDSVYVDNNEALTTSDTVDFYLQDDGSVTNGSGKAVYKDADGKLTTDAETKAATTADPLKALDEAISSIDKFRSSLGAVQNRLDSAVTNLNNTTTNLSEAQSRIQDADYATEVSNMSKAQIIQQAGNSVLAKANQVPQQVLSLLQG</sequence>
<keyword id="KW-0975">Bacterial flagellum</keyword>
<keyword id="KW-1185">Reference proteome</keyword>
<keyword id="KW-0964">Secreted</keyword>
<proteinExistence type="inferred from homology"/>
<reference key="1">
    <citation type="journal article" date="1994" name="Mol. Microbiol.">
        <title>Molecular characterization of intact, but cryptic, flagellin genes in the genus Shigella.</title>
        <authorList>
            <person name="Tominaga A."/>
            <person name="Mahmoud M.A.-H."/>
            <person name="Mukaihara T."/>
            <person name="Enomoto M."/>
        </authorList>
    </citation>
    <scope>NUCLEOTIDE SEQUENCE [GENOMIC DNA]</scope>
    <source>
        <strain>IID642</strain>
    </source>
</reference>
<reference key="2">
    <citation type="journal article" date="2002" name="Nucleic Acids Res.">
        <title>Genome sequence of Shigella flexneri 2a: insights into pathogenicity through comparison with genomes of Escherichia coli K12 and O157.</title>
        <authorList>
            <person name="Jin Q."/>
            <person name="Yuan Z."/>
            <person name="Xu J."/>
            <person name="Wang Y."/>
            <person name="Shen Y."/>
            <person name="Lu W."/>
            <person name="Wang J."/>
            <person name="Liu H."/>
            <person name="Yang J."/>
            <person name="Yang F."/>
            <person name="Zhang X."/>
            <person name="Zhang J."/>
            <person name="Yang G."/>
            <person name="Wu H."/>
            <person name="Qu D."/>
            <person name="Dong J."/>
            <person name="Sun L."/>
            <person name="Xue Y."/>
            <person name="Zhao A."/>
            <person name="Gao Y."/>
            <person name="Zhu J."/>
            <person name="Kan B."/>
            <person name="Ding K."/>
            <person name="Chen S."/>
            <person name="Cheng H."/>
            <person name="Yao Z."/>
            <person name="He B."/>
            <person name="Chen R."/>
            <person name="Ma D."/>
            <person name="Qiang B."/>
            <person name="Wen Y."/>
            <person name="Hou Y."/>
            <person name="Yu J."/>
        </authorList>
    </citation>
    <scope>NUCLEOTIDE SEQUENCE [LARGE SCALE GENOMIC DNA]</scope>
    <source>
        <strain>301 / Serotype 2a</strain>
    </source>
</reference>
<reference key="3">
    <citation type="journal article" date="2003" name="Infect. Immun.">
        <title>Complete genome sequence and comparative genomics of Shigella flexneri serotype 2a strain 2457T.</title>
        <authorList>
            <person name="Wei J."/>
            <person name="Goldberg M.B."/>
            <person name="Burland V."/>
            <person name="Venkatesan M.M."/>
            <person name="Deng W."/>
            <person name="Fournier G."/>
            <person name="Mayhew G.F."/>
            <person name="Plunkett G. III"/>
            <person name="Rose D.J."/>
            <person name="Darling A."/>
            <person name="Mau B."/>
            <person name="Perna N.T."/>
            <person name="Payne S.M."/>
            <person name="Runyen-Janecky L.J."/>
            <person name="Zhou S."/>
            <person name="Schwartz D.C."/>
            <person name="Blattner F.R."/>
        </authorList>
    </citation>
    <scope>NUCLEOTIDE SEQUENCE [LARGE SCALE GENOMIC DNA]</scope>
    <source>
        <strain>ATCC 700930 / 2457T / Serotype 2a</strain>
    </source>
</reference>
<name>FLIC_SHIFL</name>
<organism>
    <name type="scientific">Shigella flexneri</name>
    <dbReference type="NCBI Taxonomy" id="623"/>
    <lineage>
        <taxon>Bacteria</taxon>
        <taxon>Pseudomonadati</taxon>
        <taxon>Pseudomonadota</taxon>
        <taxon>Gammaproteobacteria</taxon>
        <taxon>Enterobacterales</taxon>
        <taxon>Enterobacteriaceae</taxon>
        <taxon>Shigella</taxon>
    </lineage>
</organism>
<gene>
    <name type="primary">fliC</name>
    <name type="ordered locus">SF1966</name>
    <name type="ordered locus">S2062</name>
</gene>